<evidence type="ECO:0000255" key="1">
    <source>
        <dbReference type="HAMAP-Rule" id="MF_01006"/>
    </source>
</evidence>
<protein>
    <recommendedName>
        <fullName evidence="1">Undecaprenyl-diphosphatase</fullName>
        <ecNumber evidence="1">3.6.1.27</ecNumber>
    </recommendedName>
    <alternativeName>
        <fullName evidence="1">Bacitracin resistance protein</fullName>
    </alternativeName>
    <alternativeName>
        <fullName evidence="1">Undecaprenyl pyrophosphate phosphatase</fullName>
    </alternativeName>
</protein>
<feature type="chain" id="PRO_0000227639" description="Undecaprenyl-diphosphatase">
    <location>
        <begin position="1"/>
        <end position="291"/>
    </location>
</feature>
<feature type="transmembrane region" description="Helical" evidence="1">
    <location>
        <begin position="1"/>
        <end position="21"/>
    </location>
</feature>
<feature type="transmembrane region" description="Helical" evidence="1">
    <location>
        <begin position="48"/>
        <end position="68"/>
    </location>
</feature>
<feature type="transmembrane region" description="Helical" evidence="1">
    <location>
        <begin position="102"/>
        <end position="122"/>
    </location>
</feature>
<feature type="transmembrane region" description="Helical" evidence="1">
    <location>
        <begin position="126"/>
        <end position="146"/>
    </location>
</feature>
<feature type="transmembrane region" description="Helical" evidence="1">
    <location>
        <begin position="162"/>
        <end position="182"/>
    </location>
</feature>
<feature type="transmembrane region" description="Helical" evidence="1">
    <location>
        <begin position="203"/>
        <end position="223"/>
    </location>
</feature>
<feature type="transmembrane region" description="Helical" evidence="1">
    <location>
        <begin position="231"/>
        <end position="251"/>
    </location>
</feature>
<feature type="transmembrane region" description="Helical" evidence="1">
    <location>
        <begin position="267"/>
        <end position="287"/>
    </location>
</feature>
<name>UPPP_STAAB</name>
<dbReference type="EC" id="3.6.1.27" evidence="1"/>
<dbReference type="EMBL" id="AJ938182">
    <property type="protein sequence ID" value="CAI80320.1"/>
    <property type="molecule type" value="Genomic_DNA"/>
</dbReference>
<dbReference type="RefSeq" id="WP_000469897.1">
    <property type="nucleotide sequence ID" value="NC_007622.1"/>
</dbReference>
<dbReference type="SMR" id="Q2YSP8"/>
<dbReference type="KEGG" id="sab:SAB0632c"/>
<dbReference type="HOGENOM" id="CLU_060296_2_0_9"/>
<dbReference type="GO" id="GO:0005886">
    <property type="term" value="C:plasma membrane"/>
    <property type="evidence" value="ECO:0007669"/>
    <property type="project" value="UniProtKB-SubCell"/>
</dbReference>
<dbReference type="GO" id="GO:0050380">
    <property type="term" value="F:undecaprenyl-diphosphatase activity"/>
    <property type="evidence" value="ECO:0007669"/>
    <property type="project" value="UniProtKB-UniRule"/>
</dbReference>
<dbReference type="GO" id="GO:0071555">
    <property type="term" value="P:cell wall organization"/>
    <property type="evidence" value="ECO:0007669"/>
    <property type="project" value="UniProtKB-KW"/>
</dbReference>
<dbReference type="GO" id="GO:0009252">
    <property type="term" value="P:peptidoglycan biosynthetic process"/>
    <property type="evidence" value="ECO:0007669"/>
    <property type="project" value="UniProtKB-KW"/>
</dbReference>
<dbReference type="GO" id="GO:0008360">
    <property type="term" value="P:regulation of cell shape"/>
    <property type="evidence" value="ECO:0007669"/>
    <property type="project" value="UniProtKB-KW"/>
</dbReference>
<dbReference type="GO" id="GO:0046677">
    <property type="term" value="P:response to antibiotic"/>
    <property type="evidence" value="ECO:0007669"/>
    <property type="project" value="UniProtKB-UniRule"/>
</dbReference>
<dbReference type="HAMAP" id="MF_01006">
    <property type="entry name" value="Undec_diphosphatase"/>
    <property type="match status" value="1"/>
</dbReference>
<dbReference type="InterPro" id="IPR003824">
    <property type="entry name" value="UppP"/>
</dbReference>
<dbReference type="NCBIfam" id="NF001390">
    <property type="entry name" value="PRK00281.1-4"/>
    <property type="match status" value="1"/>
</dbReference>
<dbReference type="NCBIfam" id="TIGR00753">
    <property type="entry name" value="undec_PP_bacA"/>
    <property type="match status" value="1"/>
</dbReference>
<dbReference type="PANTHER" id="PTHR30622">
    <property type="entry name" value="UNDECAPRENYL-DIPHOSPHATASE"/>
    <property type="match status" value="1"/>
</dbReference>
<dbReference type="PANTHER" id="PTHR30622:SF3">
    <property type="entry name" value="UNDECAPRENYL-DIPHOSPHATASE"/>
    <property type="match status" value="1"/>
</dbReference>
<dbReference type="Pfam" id="PF02673">
    <property type="entry name" value="BacA"/>
    <property type="match status" value="1"/>
</dbReference>
<keyword id="KW-0046">Antibiotic resistance</keyword>
<keyword id="KW-1003">Cell membrane</keyword>
<keyword id="KW-0133">Cell shape</keyword>
<keyword id="KW-0961">Cell wall biogenesis/degradation</keyword>
<keyword id="KW-0378">Hydrolase</keyword>
<keyword id="KW-0472">Membrane</keyword>
<keyword id="KW-0573">Peptidoglycan synthesis</keyword>
<keyword id="KW-0812">Transmembrane</keyword>
<keyword id="KW-1133">Transmembrane helix</keyword>
<sequence length="291" mass="32338">MFIIELIKGIILGVVEGLTEFAPVSSTGHMILVDDMWLKSSEFLGSQSAFTFKIVIQLGSVFAAAWVFRERFLEILHIGKHKHVEGQNDQQRRSKPRRLNLLHVLVGMVPAGILGLLFDDFIEEHLFSVPTVMIGLFVGAIYMIIADKYSVKVKNPQTVDQINYFQAFVIGISQAVAMWPGFSRSGSTISTGVLMKLNHKAASDFTFIMAVPIMLAASGLSLLKHYQDIQIADIPFYILGFLAAFTVGLIAIKTFLHLINKIKLIPFAIYRIVLVIFIAILYFGFGIGKGI</sequence>
<organism>
    <name type="scientific">Staphylococcus aureus (strain bovine RF122 / ET3-1)</name>
    <dbReference type="NCBI Taxonomy" id="273036"/>
    <lineage>
        <taxon>Bacteria</taxon>
        <taxon>Bacillati</taxon>
        <taxon>Bacillota</taxon>
        <taxon>Bacilli</taxon>
        <taxon>Bacillales</taxon>
        <taxon>Staphylococcaceae</taxon>
        <taxon>Staphylococcus</taxon>
    </lineage>
</organism>
<proteinExistence type="inferred from homology"/>
<reference key="1">
    <citation type="journal article" date="2007" name="PLoS ONE">
        <title>Molecular correlates of host specialization in Staphylococcus aureus.</title>
        <authorList>
            <person name="Herron-Olson L."/>
            <person name="Fitzgerald J.R."/>
            <person name="Musser J.M."/>
            <person name="Kapur V."/>
        </authorList>
    </citation>
    <scope>NUCLEOTIDE SEQUENCE [LARGE SCALE GENOMIC DNA]</scope>
    <source>
        <strain>bovine RF122 / ET3-1</strain>
    </source>
</reference>
<accession>Q2YSP8</accession>
<comment type="function">
    <text evidence="1">Catalyzes the dephosphorylation of undecaprenyl diphosphate (UPP). Confers resistance to bacitracin.</text>
</comment>
<comment type="catalytic activity">
    <reaction evidence="1">
        <text>di-trans,octa-cis-undecaprenyl diphosphate + H2O = di-trans,octa-cis-undecaprenyl phosphate + phosphate + H(+)</text>
        <dbReference type="Rhea" id="RHEA:28094"/>
        <dbReference type="ChEBI" id="CHEBI:15377"/>
        <dbReference type="ChEBI" id="CHEBI:15378"/>
        <dbReference type="ChEBI" id="CHEBI:43474"/>
        <dbReference type="ChEBI" id="CHEBI:58405"/>
        <dbReference type="ChEBI" id="CHEBI:60392"/>
        <dbReference type="EC" id="3.6.1.27"/>
    </reaction>
</comment>
<comment type="subcellular location">
    <subcellularLocation>
        <location evidence="1">Cell membrane</location>
        <topology evidence="1">Multi-pass membrane protein</topology>
    </subcellularLocation>
</comment>
<comment type="miscellaneous">
    <text>Bacitracin is thought to be involved in the inhibition of peptidoglycan synthesis by sequestering undecaprenyl diphosphate, thereby reducing the pool of lipid carrier available.</text>
</comment>
<comment type="similarity">
    <text evidence="1">Belongs to the UppP family.</text>
</comment>
<gene>
    <name evidence="1" type="primary">uppP</name>
    <name type="synonym">bacA</name>
    <name type="ordered locus">SAB0632c</name>
</gene>